<proteinExistence type="inferred from homology"/>
<evidence type="ECO:0000255" key="1"/>
<evidence type="ECO:0000305" key="2"/>
<reference key="1">
    <citation type="journal article" date="1998" name="Science">
        <title>Genome sequence of an obligate intracellular pathogen of humans: Chlamydia trachomatis.</title>
        <authorList>
            <person name="Stephens R.S."/>
            <person name="Kalman S."/>
            <person name="Lammel C.J."/>
            <person name="Fan J."/>
            <person name="Marathe R."/>
            <person name="Aravind L."/>
            <person name="Mitchell W.P."/>
            <person name="Olinger L."/>
            <person name="Tatusov R.L."/>
            <person name="Zhao Q."/>
            <person name="Koonin E.V."/>
            <person name="Davis R.W."/>
        </authorList>
    </citation>
    <scope>NUCLEOTIDE SEQUENCE [LARGE SCALE GENOMIC DNA]</scope>
    <source>
        <strain>ATCC VR-885 / DSM 19411 / UW-3/Cx</strain>
    </source>
</reference>
<feature type="chain" id="PRO_0000102590" description="ADP,ATP carrier protein 2">
    <location>
        <begin position="1"/>
        <end position="540"/>
    </location>
</feature>
<feature type="transmembrane region" description="Helical" evidence="1">
    <location>
        <begin position="23"/>
        <end position="43"/>
    </location>
</feature>
<feature type="transmembrane region" description="Helical" evidence="1">
    <location>
        <begin position="61"/>
        <end position="81"/>
    </location>
</feature>
<feature type="transmembrane region" description="Helical" evidence="1">
    <location>
        <begin position="93"/>
        <end position="113"/>
    </location>
</feature>
<feature type="transmembrane region" description="Helical" evidence="1">
    <location>
        <begin position="150"/>
        <end position="170"/>
    </location>
</feature>
<feature type="transmembrane region" description="Helical" evidence="1">
    <location>
        <begin position="185"/>
        <end position="205"/>
    </location>
</feature>
<feature type="transmembrane region" description="Helical" evidence="1">
    <location>
        <begin position="222"/>
        <end position="242"/>
    </location>
</feature>
<feature type="transmembrane region" description="Helical" evidence="1">
    <location>
        <begin position="292"/>
        <end position="312"/>
    </location>
</feature>
<feature type="transmembrane region" description="Helical" evidence="1">
    <location>
        <begin position="334"/>
        <end position="354"/>
    </location>
</feature>
<feature type="transmembrane region" description="Helical" evidence="1">
    <location>
        <begin position="361"/>
        <end position="381"/>
    </location>
</feature>
<feature type="transmembrane region" description="Helical" evidence="1">
    <location>
        <begin position="389"/>
        <end position="409"/>
    </location>
</feature>
<feature type="transmembrane region" description="Helical" evidence="1">
    <location>
        <begin position="455"/>
        <end position="475"/>
    </location>
</feature>
<feature type="transmembrane region" description="Helical" evidence="1">
    <location>
        <begin position="477"/>
        <end position="497"/>
    </location>
</feature>
<gene>
    <name type="primary">tlcB</name>
    <name type="ordered locus">CT_495</name>
</gene>
<organism>
    <name type="scientific">Chlamydia trachomatis serovar D (strain ATCC VR-885 / DSM 19411 / UW-3/Cx)</name>
    <dbReference type="NCBI Taxonomy" id="272561"/>
    <lineage>
        <taxon>Bacteria</taxon>
        <taxon>Pseudomonadati</taxon>
        <taxon>Chlamydiota</taxon>
        <taxon>Chlamydiia</taxon>
        <taxon>Chlamydiales</taxon>
        <taxon>Chlamydiaceae</taxon>
        <taxon>Chlamydia/Chlamydophila group</taxon>
        <taxon>Chlamydia</taxon>
    </lineage>
</organism>
<comment type="subcellular location">
    <subcellularLocation>
        <location evidence="2">Cell membrane</location>
        <topology evidence="2">Multi-pass membrane protein</topology>
    </subcellularLocation>
</comment>
<comment type="similarity">
    <text evidence="2">Belongs to the ADP/ATP translocase tlc family.</text>
</comment>
<protein>
    <recommendedName>
        <fullName>ADP,ATP carrier protein 2</fullName>
    </recommendedName>
    <alternativeName>
        <fullName>ADP/ATP translocase 2</fullName>
    </alternativeName>
</protein>
<dbReference type="EMBL" id="AE001273">
    <property type="protein sequence ID" value="AAC68096.1"/>
    <property type="molecule type" value="Genomic_DNA"/>
</dbReference>
<dbReference type="PIR" id="E71503">
    <property type="entry name" value="E71503"/>
</dbReference>
<dbReference type="RefSeq" id="NP_220009.1">
    <property type="nucleotide sequence ID" value="NC_000117.1"/>
</dbReference>
<dbReference type="STRING" id="272561.CT_495"/>
<dbReference type="EnsemblBacteria" id="AAC68096">
    <property type="protein sequence ID" value="AAC68096"/>
    <property type="gene ID" value="CT_495"/>
</dbReference>
<dbReference type="GeneID" id="884269"/>
<dbReference type="KEGG" id="ctr:CT_495"/>
<dbReference type="PATRIC" id="fig|272561.5.peg.538"/>
<dbReference type="HOGENOM" id="CLU_023964_0_1_0"/>
<dbReference type="InParanoid" id="O84502"/>
<dbReference type="OrthoDB" id="19786at2"/>
<dbReference type="Proteomes" id="UP000000431">
    <property type="component" value="Chromosome"/>
</dbReference>
<dbReference type="GO" id="GO:0005886">
    <property type="term" value="C:plasma membrane"/>
    <property type="evidence" value="ECO:0007669"/>
    <property type="project" value="UniProtKB-SubCell"/>
</dbReference>
<dbReference type="GO" id="GO:0005524">
    <property type="term" value="F:ATP binding"/>
    <property type="evidence" value="ECO:0007669"/>
    <property type="project" value="UniProtKB-KW"/>
</dbReference>
<dbReference type="GO" id="GO:0005471">
    <property type="term" value="F:ATP:ADP antiporter activity"/>
    <property type="evidence" value="ECO:0007669"/>
    <property type="project" value="InterPro"/>
</dbReference>
<dbReference type="InterPro" id="IPR004667">
    <property type="entry name" value="ADP_ATP_car_bac_type"/>
</dbReference>
<dbReference type="NCBIfam" id="TIGR00769">
    <property type="entry name" value="AAA"/>
    <property type="match status" value="1"/>
</dbReference>
<dbReference type="PANTHER" id="PTHR31187">
    <property type="match status" value="1"/>
</dbReference>
<dbReference type="PANTHER" id="PTHR31187:SF1">
    <property type="entry name" value="ADP,ATP CARRIER PROTEIN 1"/>
    <property type="match status" value="1"/>
</dbReference>
<dbReference type="Pfam" id="PF03219">
    <property type="entry name" value="TLC"/>
    <property type="match status" value="1"/>
</dbReference>
<keyword id="KW-0067">ATP-binding</keyword>
<keyword id="KW-1003">Cell membrane</keyword>
<keyword id="KW-0472">Membrane</keyword>
<keyword id="KW-0547">Nucleotide-binding</keyword>
<keyword id="KW-1185">Reference proteome</keyword>
<keyword id="KW-0812">Transmembrane</keyword>
<keyword id="KW-1133">Transmembrane helix</keyword>
<keyword id="KW-0813">Transport</keyword>
<sequence length="540" mass="59764">MSSEVKSFSKFRGYFFPIYRSEFSKFIPLFFLAFFVGVNYALLKTTKDSLVLVGSRAGAEVIPFLKVWGIVPGAVIVTMIYGWMSRRYSRGTVFISLVGGFLGFFALFATVIYPIGDALHLNKLAAKLQSILPPGGRGFVVMVQYWSYSLYYVMSELWSSIVLSTLFWGVANHITSVREAGRFYALINTGLNLSSVFAGEVSLWLGRNPVIAFPMAVDPWHEVLLNITLLIVLAGGVILYLYQKLDRLMDETSMLKEGLAAEMSVAQLKKEKKRSKAKAKSLFALLLRSRYLLGIAVVVLSYNLVIHLFEVVWKDQVCRIYASRVEFNSYMSRITTLTGIVSALTGIFAAGQTIRRWGWTIGALVPPLTMLITGALFFGAIYAVKGDAMIFGGILGISPLVLTAWLGGVQNVFSRAIKFTYFDQTKEMAFIPLEDDEKNYGKAAIDGVISRVGKSGGSLVYQGLLIIFSSVAASLNAITIVLLLALGSWIFVIAWLGREYTAKTEALFRVNVSEEDVLQEEREASSLVDAESREEPVTTL</sequence>
<accession>O84502</accession>
<name>TLC2_CHLTR</name>